<organism>
    <name type="scientific">Escherichia coli O7:K1 (strain IAI39 / ExPEC)</name>
    <dbReference type="NCBI Taxonomy" id="585057"/>
    <lineage>
        <taxon>Bacteria</taxon>
        <taxon>Pseudomonadati</taxon>
        <taxon>Pseudomonadota</taxon>
        <taxon>Gammaproteobacteria</taxon>
        <taxon>Enterobacterales</taxon>
        <taxon>Enterobacteriaceae</taxon>
        <taxon>Escherichia</taxon>
    </lineage>
</organism>
<evidence type="ECO:0000255" key="1">
    <source>
        <dbReference type="HAMAP-Rule" id="MF_01825"/>
    </source>
</evidence>
<proteinExistence type="inferred from homology"/>
<accession>B7NP01</accession>
<protein>
    <recommendedName>
        <fullName evidence="1">Erythronate-4-phosphate dehydrogenase</fullName>
        <ecNumber evidence="1">1.1.1.290</ecNumber>
    </recommendedName>
</protein>
<name>PDXB_ECO7I</name>
<dbReference type="EC" id="1.1.1.290" evidence="1"/>
<dbReference type="EMBL" id="CU928164">
    <property type="protein sequence ID" value="CAR18595.1"/>
    <property type="molecule type" value="Genomic_DNA"/>
</dbReference>
<dbReference type="RefSeq" id="WP_000699116.1">
    <property type="nucleotide sequence ID" value="NC_011750.1"/>
</dbReference>
<dbReference type="RefSeq" id="YP_002408425.1">
    <property type="nucleotide sequence ID" value="NC_011750.1"/>
</dbReference>
<dbReference type="SMR" id="B7NP01"/>
<dbReference type="STRING" id="585057.ECIAI39_2469"/>
<dbReference type="KEGG" id="ect:ECIAI39_2469"/>
<dbReference type="PATRIC" id="fig|585057.6.peg.2573"/>
<dbReference type="HOGENOM" id="CLU_019796_4_0_6"/>
<dbReference type="UniPathway" id="UPA00244">
    <property type="reaction ID" value="UER00310"/>
</dbReference>
<dbReference type="Proteomes" id="UP000000749">
    <property type="component" value="Chromosome"/>
</dbReference>
<dbReference type="GO" id="GO:0005829">
    <property type="term" value="C:cytosol"/>
    <property type="evidence" value="ECO:0007669"/>
    <property type="project" value="UniProtKB-ARBA"/>
</dbReference>
<dbReference type="GO" id="GO:0033711">
    <property type="term" value="F:4-phosphoerythronate dehydrogenase activity"/>
    <property type="evidence" value="ECO:0007669"/>
    <property type="project" value="UniProtKB-EC"/>
</dbReference>
<dbReference type="GO" id="GO:0051287">
    <property type="term" value="F:NAD binding"/>
    <property type="evidence" value="ECO:0007669"/>
    <property type="project" value="InterPro"/>
</dbReference>
<dbReference type="GO" id="GO:0046983">
    <property type="term" value="F:protein dimerization activity"/>
    <property type="evidence" value="ECO:0007669"/>
    <property type="project" value="InterPro"/>
</dbReference>
<dbReference type="GO" id="GO:0036001">
    <property type="term" value="P:'de novo' pyridoxal 5'-phosphate biosynthetic process"/>
    <property type="evidence" value="ECO:0007669"/>
    <property type="project" value="TreeGrafter"/>
</dbReference>
<dbReference type="GO" id="GO:0008615">
    <property type="term" value="P:pyridoxine biosynthetic process"/>
    <property type="evidence" value="ECO:0007669"/>
    <property type="project" value="UniProtKB-UniRule"/>
</dbReference>
<dbReference type="CDD" id="cd12158">
    <property type="entry name" value="ErythrP_dh"/>
    <property type="match status" value="1"/>
</dbReference>
<dbReference type="FunFam" id="3.30.1370.170:FF:000001">
    <property type="entry name" value="Erythronate-4-phosphate dehydrogenase"/>
    <property type="match status" value="1"/>
</dbReference>
<dbReference type="FunFam" id="3.40.50.720:FF:000093">
    <property type="entry name" value="Erythronate-4-phosphate dehydrogenase"/>
    <property type="match status" value="1"/>
</dbReference>
<dbReference type="Gene3D" id="3.30.1370.170">
    <property type="match status" value="1"/>
</dbReference>
<dbReference type="Gene3D" id="3.40.50.720">
    <property type="entry name" value="NAD(P)-binding Rossmann-like Domain"/>
    <property type="match status" value="2"/>
</dbReference>
<dbReference type="HAMAP" id="MF_01825">
    <property type="entry name" value="PdxB"/>
    <property type="match status" value="1"/>
</dbReference>
<dbReference type="InterPro" id="IPR006139">
    <property type="entry name" value="D-isomer_2_OHA_DH_cat_dom"/>
</dbReference>
<dbReference type="InterPro" id="IPR029753">
    <property type="entry name" value="D-isomer_DH_CS"/>
</dbReference>
<dbReference type="InterPro" id="IPR029752">
    <property type="entry name" value="D-isomer_DH_CS1"/>
</dbReference>
<dbReference type="InterPro" id="IPR006140">
    <property type="entry name" value="D-isomer_DH_NAD-bd"/>
</dbReference>
<dbReference type="InterPro" id="IPR020921">
    <property type="entry name" value="Erythronate-4-P_DHase"/>
</dbReference>
<dbReference type="InterPro" id="IPR024531">
    <property type="entry name" value="Erythronate-4-P_DHase_dimer"/>
</dbReference>
<dbReference type="InterPro" id="IPR036291">
    <property type="entry name" value="NAD(P)-bd_dom_sf"/>
</dbReference>
<dbReference type="InterPro" id="IPR038251">
    <property type="entry name" value="PdxB_dimer_sf"/>
</dbReference>
<dbReference type="NCBIfam" id="NF001309">
    <property type="entry name" value="PRK00257.1"/>
    <property type="match status" value="1"/>
</dbReference>
<dbReference type="NCBIfam" id="NF011966">
    <property type="entry name" value="PRK15438.1"/>
    <property type="match status" value="1"/>
</dbReference>
<dbReference type="PANTHER" id="PTHR42938">
    <property type="entry name" value="FORMATE DEHYDROGENASE 1"/>
    <property type="match status" value="1"/>
</dbReference>
<dbReference type="PANTHER" id="PTHR42938:SF9">
    <property type="entry name" value="FORMATE DEHYDROGENASE 1"/>
    <property type="match status" value="1"/>
</dbReference>
<dbReference type="Pfam" id="PF00389">
    <property type="entry name" value="2-Hacid_dh"/>
    <property type="match status" value="1"/>
</dbReference>
<dbReference type="Pfam" id="PF02826">
    <property type="entry name" value="2-Hacid_dh_C"/>
    <property type="match status" value="1"/>
</dbReference>
<dbReference type="Pfam" id="PF11890">
    <property type="entry name" value="DUF3410"/>
    <property type="match status" value="1"/>
</dbReference>
<dbReference type="SUPFAM" id="SSF52283">
    <property type="entry name" value="Formate/glycerate dehydrogenase catalytic domain-like"/>
    <property type="match status" value="1"/>
</dbReference>
<dbReference type="SUPFAM" id="SSF51735">
    <property type="entry name" value="NAD(P)-binding Rossmann-fold domains"/>
    <property type="match status" value="1"/>
</dbReference>
<dbReference type="PROSITE" id="PS00065">
    <property type="entry name" value="D_2_HYDROXYACID_DH_1"/>
    <property type="match status" value="1"/>
</dbReference>
<dbReference type="PROSITE" id="PS00671">
    <property type="entry name" value="D_2_HYDROXYACID_DH_3"/>
    <property type="match status" value="1"/>
</dbReference>
<feature type="chain" id="PRO_1000188262" description="Erythronate-4-phosphate dehydrogenase">
    <location>
        <begin position="1"/>
        <end position="378"/>
    </location>
</feature>
<feature type="active site" evidence="1">
    <location>
        <position position="208"/>
    </location>
</feature>
<feature type="active site" evidence="1">
    <location>
        <position position="237"/>
    </location>
</feature>
<feature type="active site" description="Proton donor" evidence="1">
    <location>
        <position position="254"/>
    </location>
</feature>
<feature type="binding site" evidence="1">
    <location>
        <position position="45"/>
    </location>
    <ligand>
        <name>substrate</name>
    </ligand>
</feature>
<feature type="binding site" evidence="1">
    <location>
        <position position="66"/>
    </location>
    <ligand>
        <name>substrate</name>
    </ligand>
</feature>
<feature type="binding site" evidence="1">
    <location>
        <position position="146"/>
    </location>
    <ligand>
        <name>NAD(+)</name>
        <dbReference type="ChEBI" id="CHEBI:57540"/>
    </ligand>
</feature>
<feature type="binding site" evidence="1">
    <location>
        <position position="175"/>
    </location>
    <ligand>
        <name>NAD(+)</name>
        <dbReference type="ChEBI" id="CHEBI:57540"/>
    </ligand>
</feature>
<feature type="binding site" evidence="1">
    <location>
        <position position="232"/>
    </location>
    <ligand>
        <name>NAD(+)</name>
        <dbReference type="ChEBI" id="CHEBI:57540"/>
    </ligand>
</feature>
<feature type="binding site" evidence="1">
    <location>
        <position position="257"/>
    </location>
    <ligand>
        <name>NAD(+)</name>
        <dbReference type="ChEBI" id="CHEBI:57540"/>
    </ligand>
</feature>
<feature type="binding site" evidence="1">
    <location>
        <position position="258"/>
    </location>
    <ligand>
        <name>substrate</name>
    </ligand>
</feature>
<sequence>MKILVDENMPYARDLFSRLGEVTAVPGRPIPVAQLADADALMVRSVTKVNESLLAGKPIKFVGTATAGTDHIDEAWLKQAGIGFSAAPGCNAIAVVEYVFSSLLMLAERDGFSLHERTVGIVGVGNVGRRLQARLEALGITTLLCDPPRADRGDEGDFRSLNELVQHADILTFHTPLFKDGPYKTLHLADEKLIRSLKPGAILINACRGAVVDNTALLTCLNEGQKLSVVLDVWEGEPELNVELLKKVDIGTPHIAGYTLEGKARGTTQVFEAYSKFIGHEQHVALDTLLPAPEFGRITLHGPLDQPTLKRLVHLVYDVRRDDAPLRKVAGIPGEFDKLRKNYLERREWSSLYVICDDASAASLLCKLGFNAVHHPAR</sequence>
<reference key="1">
    <citation type="journal article" date="2009" name="PLoS Genet.">
        <title>Organised genome dynamics in the Escherichia coli species results in highly diverse adaptive paths.</title>
        <authorList>
            <person name="Touchon M."/>
            <person name="Hoede C."/>
            <person name="Tenaillon O."/>
            <person name="Barbe V."/>
            <person name="Baeriswyl S."/>
            <person name="Bidet P."/>
            <person name="Bingen E."/>
            <person name="Bonacorsi S."/>
            <person name="Bouchier C."/>
            <person name="Bouvet O."/>
            <person name="Calteau A."/>
            <person name="Chiapello H."/>
            <person name="Clermont O."/>
            <person name="Cruveiller S."/>
            <person name="Danchin A."/>
            <person name="Diard M."/>
            <person name="Dossat C."/>
            <person name="Karoui M.E."/>
            <person name="Frapy E."/>
            <person name="Garry L."/>
            <person name="Ghigo J.M."/>
            <person name="Gilles A.M."/>
            <person name="Johnson J."/>
            <person name="Le Bouguenec C."/>
            <person name="Lescat M."/>
            <person name="Mangenot S."/>
            <person name="Martinez-Jehanne V."/>
            <person name="Matic I."/>
            <person name="Nassif X."/>
            <person name="Oztas S."/>
            <person name="Petit M.A."/>
            <person name="Pichon C."/>
            <person name="Rouy Z."/>
            <person name="Ruf C.S."/>
            <person name="Schneider D."/>
            <person name="Tourret J."/>
            <person name="Vacherie B."/>
            <person name="Vallenet D."/>
            <person name="Medigue C."/>
            <person name="Rocha E.P.C."/>
            <person name="Denamur E."/>
        </authorList>
    </citation>
    <scope>NUCLEOTIDE SEQUENCE [LARGE SCALE GENOMIC DNA]</scope>
    <source>
        <strain>IAI39 / ExPEC</strain>
    </source>
</reference>
<gene>
    <name evidence="1" type="primary">pdxB</name>
    <name type="ordered locus">ECIAI39_2469</name>
</gene>
<keyword id="KW-0963">Cytoplasm</keyword>
<keyword id="KW-0520">NAD</keyword>
<keyword id="KW-0560">Oxidoreductase</keyword>
<keyword id="KW-0664">Pyridoxine biosynthesis</keyword>
<comment type="function">
    <text evidence="1">Catalyzes the oxidation of erythronate-4-phosphate to 3-hydroxy-2-oxo-4-phosphonooxybutanoate.</text>
</comment>
<comment type="catalytic activity">
    <reaction evidence="1">
        <text>4-phospho-D-erythronate + NAD(+) = (R)-3-hydroxy-2-oxo-4-phosphooxybutanoate + NADH + H(+)</text>
        <dbReference type="Rhea" id="RHEA:18829"/>
        <dbReference type="ChEBI" id="CHEBI:15378"/>
        <dbReference type="ChEBI" id="CHEBI:57540"/>
        <dbReference type="ChEBI" id="CHEBI:57945"/>
        <dbReference type="ChEBI" id="CHEBI:58538"/>
        <dbReference type="ChEBI" id="CHEBI:58766"/>
        <dbReference type="EC" id="1.1.1.290"/>
    </reaction>
</comment>
<comment type="pathway">
    <text evidence="1">Cofactor biosynthesis; pyridoxine 5'-phosphate biosynthesis; pyridoxine 5'-phosphate from D-erythrose 4-phosphate: step 2/5.</text>
</comment>
<comment type="subunit">
    <text evidence="1">Homodimer.</text>
</comment>
<comment type="subcellular location">
    <subcellularLocation>
        <location evidence="1">Cytoplasm</location>
    </subcellularLocation>
</comment>
<comment type="similarity">
    <text evidence="1">Belongs to the D-isomer specific 2-hydroxyacid dehydrogenase family. PdxB subfamily.</text>
</comment>